<organism>
    <name type="scientific">Eulophus pennicornis</name>
    <name type="common">Parasitoid wasp</name>
    <dbReference type="NCBI Taxonomy" id="108749"/>
    <lineage>
        <taxon>Eukaryota</taxon>
        <taxon>Metazoa</taxon>
        <taxon>Ecdysozoa</taxon>
        <taxon>Arthropoda</taxon>
        <taxon>Hexapoda</taxon>
        <taxon>Insecta</taxon>
        <taxon>Pterygota</taxon>
        <taxon>Neoptera</taxon>
        <taxon>Endopterygota</taxon>
        <taxon>Hymenoptera</taxon>
        <taxon>Apocrita</taxon>
        <taxon>Proctotrupomorpha</taxon>
        <taxon>Chalcidoidea</taxon>
        <taxon>Eulophidae</taxon>
        <taxon>Eulophinae</taxon>
        <taxon>Eulophus</taxon>
    </lineage>
</organism>
<keyword id="KW-1015">Disulfide bond</keyword>
<keyword id="KW-0325">Glycoprotein</keyword>
<keyword id="KW-0378">Hydrolase</keyword>
<keyword id="KW-0479">Metal-binding</keyword>
<keyword id="KW-0482">Metalloprotease</keyword>
<keyword id="KW-0645">Protease</keyword>
<keyword id="KW-0964">Secreted</keyword>
<keyword id="KW-0732">Signal</keyword>
<keyword id="KW-0800">Toxin</keyword>
<keyword id="KW-0862">Zinc</keyword>
<keyword id="KW-0865">Zymogen</keyword>
<proteinExistence type="evidence at transcript level"/>
<comment type="function">
    <text evidence="1">The recombinant protein has gelatinase activity. In vivo, injection of this recombinant into fifth instar L.oleracea (host) larvae results in partial insect mortality associated with the molt to sixth instar, with surviving insects showing retarded development and growth (By similarity).</text>
</comment>
<comment type="cofactor">
    <cofactor evidence="1">
        <name>Zn(2+)</name>
        <dbReference type="ChEBI" id="CHEBI:29105"/>
    </cofactor>
    <text evidence="1">Binds 1 zinc ion per subunit.</text>
</comment>
<comment type="activity regulation">
    <text evidence="1">The gelatinase activity is inhibited by EDTA.</text>
</comment>
<comment type="subunit">
    <text evidence="1">Monomer.</text>
</comment>
<comment type="subcellular location">
    <subcellularLocation>
        <location evidence="1">Secreted</location>
    </subcellularLocation>
</comment>
<comment type="tissue specificity">
    <text>Expressed by the venom gland.</text>
</comment>
<comment type="domain">
    <text evidence="1">The N-terminal section (alone) shows no toxic effect when injected into the host. This section may function in stabilizing the catalytic part of the protein, or in directing it to specific target sites of action (By similarity).</text>
</comment>
<comment type="similarity">
    <text evidence="5">In the C-terminal section; belongs to the venom metalloproteinase (M12B) family.</text>
</comment>
<accession>B5AJT2</accession>
<evidence type="ECO:0000250" key="1"/>
<evidence type="ECO:0000255" key="2"/>
<evidence type="ECO:0000255" key="3">
    <source>
        <dbReference type="PROSITE-ProRule" id="PRU00276"/>
    </source>
</evidence>
<evidence type="ECO:0000255" key="4">
    <source>
        <dbReference type="PROSITE-ProRule" id="PRU10095"/>
    </source>
</evidence>
<evidence type="ECO:0000305" key="5"/>
<reference key="1">
    <citation type="journal article" date="2009" name="Insect Mol. Biol.">
        <title>A venom metalloproteinase from the parasitic wasp Eulophus pennicornis is toxic towards its host, tomato moth (Lacanobia oleracae).</title>
        <authorList>
            <person name="Price D.R."/>
            <person name="Bell H.A."/>
            <person name="Hinchliffe G."/>
            <person name="Fitches E."/>
            <person name="Weaver R."/>
            <person name="Gatehouse J.A."/>
        </authorList>
    </citation>
    <scope>NUCLEOTIDE SEQUENCE [MRNA]</scope>
</reference>
<feature type="signal peptide" evidence="2">
    <location>
        <begin position="1"/>
        <end position="22"/>
    </location>
</feature>
<feature type="chain" id="PRO_0000423026" description="Venom metalloproteinase 1">
    <location>
        <begin position="23"/>
        <end position="431"/>
    </location>
</feature>
<feature type="domain" description="Peptidase M12B" evidence="3">
    <location>
        <begin position="228"/>
        <end position="428"/>
    </location>
</feature>
<feature type="active site" evidence="3 4">
    <location>
        <position position="364"/>
    </location>
</feature>
<feature type="binding site" evidence="1">
    <location>
        <position position="363"/>
    </location>
    <ligand>
        <name>Zn(2+)</name>
        <dbReference type="ChEBI" id="CHEBI:29105"/>
        <note>catalytic</note>
    </ligand>
</feature>
<feature type="binding site" evidence="1">
    <location>
        <position position="367"/>
    </location>
    <ligand>
        <name>Zn(2+)</name>
        <dbReference type="ChEBI" id="CHEBI:29105"/>
        <note>catalytic</note>
    </ligand>
</feature>
<feature type="binding site" evidence="1">
    <location>
        <position position="373"/>
    </location>
    <ligand>
        <name>Zn(2+)</name>
        <dbReference type="ChEBI" id="CHEBI:29105"/>
        <note>catalytic</note>
    </ligand>
</feature>
<feature type="glycosylation site" description="N-linked (GlcNAc...) asparagine" evidence="2">
    <location>
        <position position="64"/>
    </location>
</feature>
<feature type="glycosylation site" description="N-linked (GlcNAc...) asparagine" evidence="2">
    <location>
        <position position="113"/>
    </location>
</feature>
<feature type="glycosylation site" description="N-linked (GlcNAc...) asparagine" evidence="2">
    <location>
        <position position="148"/>
    </location>
</feature>
<feature type="glycosylation site" description="N-linked (GlcNAc...) asparagine" evidence="2">
    <location>
        <position position="187"/>
    </location>
</feature>
<feature type="glycosylation site" description="N-linked (GlcNAc...) asparagine" evidence="2">
    <location>
        <position position="414"/>
    </location>
</feature>
<feature type="disulfide bond" evidence="3">
    <location>
        <begin position="340"/>
        <end position="423"/>
    </location>
</feature>
<feature type="disulfide bond" evidence="3">
    <location>
        <begin position="379"/>
        <end position="407"/>
    </location>
</feature>
<sequence>MDLFILTRFILFLSFFMKSIHCQYSESQESGHNRNAPDKELTTEEFQLIFHQSQTVDIEYDFINITTEMIETERKVSFTIDGKEYHLSLTPAASQSVLPYGTKIKSAIWWTDNDTHIHEEDYSDERWDSRAIYENLEIMATILVRTENGTSYYDGVFVKYSNEGVRSLPGRLMNIYGANYHFVYDSNGSVYDVVLNGQDEPAVPADMASKIIFYSETPCTCRLLIIQDLLMKTSRRLSSISTIFWNAVNLRFRPVQHPKVNIIITGIVIAKNEAAFQHVYRARYSKNSKLVHTGRVIDNGRYFFGTNFDPYYDNYDASFTMASMDDPTGKGGATVIGGICSSSNNIAYIRDVGSYSGVKVATHELGHLLNGQHDSDTTCSEKINDNIYTIMAKQGSTKASKFVWSSCTLTAFANFSKTTSAACLKDTYRKQ</sequence>
<name>VMP01_EULPE</name>
<dbReference type="EMBL" id="EU853177">
    <property type="protein sequence ID" value="ACF60597.1"/>
    <property type="molecule type" value="mRNA"/>
</dbReference>
<dbReference type="SMR" id="B5AJT2"/>
<dbReference type="GO" id="GO:0005576">
    <property type="term" value="C:extracellular region"/>
    <property type="evidence" value="ECO:0007669"/>
    <property type="project" value="UniProtKB-SubCell"/>
</dbReference>
<dbReference type="GO" id="GO:0046872">
    <property type="term" value="F:metal ion binding"/>
    <property type="evidence" value="ECO:0007669"/>
    <property type="project" value="UniProtKB-KW"/>
</dbReference>
<dbReference type="GO" id="GO:0004222">
    <property type="term" value="F:metalloendopeptidase activity"/>
    <property type="evidence" value="ECO:0007669"/>
    <property type="project" value="InterPro"/>
</dbReference>
<dbReference type="GO" id="GO:0090729">
    <property type="term" value="F:toxin activity"/>
    <property type="evidence" value="ECO:0007669"/>
    <property type="project" value="UniProtKB-KW"/>
</dbReference>
<dbReference type="GO" id="GO:0006509">
    <property type="term" value="P:membrane protein ectodomain proteolysis"/>
    <property type="evidence" value="ECO:0007669"/>
    <property type="project" value="TreeGrafter"/>
</dbReference>
<dbReference type="Gene3D" id="3.40.390.10">
    <property type="entry name" value="Collagenase (Catalytic Domain)"/>
    <property type="match status" value="1"/>
</dbReference>
<dbReference type="InterPro" id="IPR024079">
    <property type="entry name" value="MetalloPept_cat_dom_sf"/>
</dbReference>
<dbReference type="InterPro" id="IPR001590">
    <property type="entry name" value="Peptidase_M12B"/>
</dbReference>
<dbReference type="PANTHER" id="PTHR11905">
    <property type="entry name" value="ADAM A DISINTEGRIN AND METALLOPROTEASE DOMAIN"/>
    <property type="match status" value="1"/>
</dbReference>
<dbReference type="PANTHER" id="PTHR11905:SF249">
    <property type="entry name" value="SOL NARAE, ISOFORM C"/>
    <property type="match status" value="1"/>
</dbReference>
<dbReference type="Pfam" id="PF13688">
    <property type="entry name" value="Reprolysin_5"/>
    <property type="match status" value="1"/>
</dbReference>
<dbReference type="SUPFAM" id="SSF55486">
    <property type="entry name" value="Metalloproteases ('zincins'), catalytic domain"/>
    <property type="match status" value="1"/>
</dbReference>
<dbReference type="PROSITE" id="PS50215">
    <property type="entry name" value="ADAM_MEPRO"/>
    <property type="match status" value="1"/>
</dbReference>
<dbReference type="PROSITE" id="PS00142">
    <property type="entry name" value="ZINC_PROTEASE"/>
    <property type="match status" value="1"/>
</dbReference>
<protein>
    <recommendedName>
        <fullName>Venom metalloproteinase 1</fullName>
        <shortName>EpMP1</shortName>
    </recommendedName>
</protein>